<evidence type="ECO:0000250" key="1"/>
<evidence type="ECO:0000255" key="2">
    <source>
        <dbReference type="HAMAP-Rule" id="MF_01356"/>
    </source>
</evidence>
<comment type="function">
    <text evidence="1">NDH-1 shuttles electrons from NADH, via FMN and iron-sulfur (Fe-S) centers, to quinones in the respiratory chain. Couples the redox reaction to proton translocation (for every two electrons transferred, four hydrogen ions are translocated across the cytoplasmic membrane), and thus conserves the redox energy in a proton gradient (By similarity).</text>
</comment>
<comment type="catalytic activity">
    <reaction evidence="2">
        <text>a quinone + NADH + 5 H(+)(in) = a quinol + NAD(+) + 4 H(+)(out)</text>
        <dbReference type="Rhea" id="RHEA:57888"/>
        <dbReference type="ChEBI" id="CHEBI:15378"/>
        <dbReference type="ChEBI" id="CHEBI:24646"/>
        <dbReference type="ChEBI" id="CHEBI:57540"/>
        <dbReference type="ChEBI" id="CHEBI:57945"/>
        <dbReference type="ChEBI" id="CHEBI:132124"/>
    </reaction>
</comment>
<comment type="cofactor">
    <cofactor evidence="2">
        <name>[4Fe-4S] cluster</name>
        <dbReference type="ChEBI" id="CHEBI:49883"/>
    </cofactor>
    <text evidence="2">Binds 1 [4Fe-4S] cluster.</text>
</comment>
<comment type="subunit">
    <text evidence="2">NDH-1 is composed of 14 different subunits. Subunits NuoB, C, D, E, F, and G constitute the peripheral sector of the complex.</text>
</comment>
<comment type="subcellular location">
    <subcellularLocation>
        <location evidence="2">Cell inner membrane</location>
        <topology evidence="2">Peripheral membrane protein</topology>
        <orientation evidence="2">Cytoplasmic side</orientation>
    </subcellularLocation>
</comment>
<comment type="similarity">
    <text evidence="2">Belongs to the complex I 20 kDa subunit family.</text>
</comment>
<keyword id="KW-0004">4Fe-4S</keyword>
<keyword id="KW-0997">Cell inner membrane</keyword>
<keyword id="KW-1003">Cell membrane</keyword>
<keyword id="KW-0408">Iron</keyword>
<keyword id="KW-0411">Iron-sulfur</keyword>
<keyword id="KW-0472">Membrane</keyword>
<keyword id="KW-0479">Metal-binding</keyword>
<keyword id="KW-0520">NAD</keyword>
<keyword id="KW-0874">Quinone</keyword>
<keyword id="KW-1185">Reference proteome</keyword>
<keyword id="KW-1278">Translocase</keyword>
<keyword id="KW-0813">Transport</keyword>
<keyword id="KW-0830">Ubiquinone</keyword>
<name>NUOB2_ANADE</name>
<protein>
    <recommendedName>
        <fullName evidence="2">NADH-quinone oxidoreductase subunit B 2</fullName>
        <ecNumber evidence="2">7.1.1.-</ecNumber>
    </recommendedName>
    <alternativeName>
        <fullName evidence="2">NADH dehydrogenase I subunit B 2</fullName>
    </alternativeName>
    <alternativeName>
        <fullName evidence="2">NDH-1 subunit B 2</fullName>
    </alternativeName>
</protein>
<dbReference type="EC" id="7.1.1.-" evidence="2"/>
<dbReference type="EMBL" id="CP000251">
    <property type="protein sequence ID" value="ABC82342.1"/>
    <property type="molecule type" value="Genomic_DNA"/>
</dbReference>
<dbReference type="RefSeq" id="WP_011421624.1">
    <property type="nucleotide sequence ID" value="NC_007760.1"/>
</dbReference>
<dbReference type="SMR" id="Q2IL09"/>
<dbReference type="STRING" id="290397.Adeh_2572"/>
<dbReference type="KEGG" id="ade:Adeh_2572"/>
<dbReference type="eggNOG" id="COG0377">
    <property type="taxonomic scope" value="Bacteria"/>
</dbReference>
<dbReference type="HOGENOM" id="CLU_055737_7_3_7"/>
<dbReference type="OrthoDB" id="9786737at2"/>
<dbReference type="Proteomes" id="UP000001935">
    <property type="component" value="Chromosome"/>
</dbReference>
<dbReference type="GO" id="GO:0005886">
    <property type="term" value="C:plasma membrane"/>
    <property type="evidence" value="ECO:0007669"/>
    <property type="project" value="UniProtKB-SubCell"/>
</dbReference>
<dbReference type="GO" id="GO:0045271">
    <property type="term" value="C:respiratory chain complex I"/>
    <property type="evidence" value="ECO:0007669"/>
    <property type="project" value="TreeGrafter"/>
</dbReference>
<dbReference type="GO" id="GO:0051539">
    <property type="term" value="F:4 iron, 4 sulfur cluster binding"/>
    <property type="evidence" value="ECO:0007669"/>
    <property type="project" value="UniProtKB-KW"/>
</dbReference>
<dbReference type="GO" id="GO:0005506">
    <property type="term" value="F:iron ion binding"/>
    <property type="evidence" value="ECO:0007669"/>
    <property type="project" value="UniProtKB-UniRule"/>
</dbReference>
<dbReference type="GO" id="GO:0008137">
    <property type="term" value="F:NADH dehydrogenase (ubiquinone) activity"/>
    <property type="evidence" value="ECO:0007669"/>
    <property type="project" value="InterPro"/>
</dbReference>
<dbReference type="GO" id="GO:0050136">
    <property type="term" value="F:NADH:ubiquinone reductase (non-electrogenic) activity"/>
    <property type="evidence" value="ECO:0007669"/>
    <property type="project" value="UniProtKB-UniRule"/>
</dbReference>
<dbReference type="GO" id="GO:0048038">
    <property type="term" value="F:quinone binding"/>
    <property type="evidence" value="ECO:0007669"/>
    <property type="project" value="UniProtKB-KW"/>
</dbReference>
<dbReference type="GO" id="GO:0009060">
    <property type="term" value="P:aerobic respiration"/>
    <property type="evidence" value="ECO:0007669"/>
    <property type="project" value="TreeGrafter"/>
</dbReference>
<dbReference type="GO" id="GO:0015990">
    <property type="term" value="P:electron transport coupled proton transport"/>
    <property type="evidence" value="ECO:0007669"/>
    <property type="project" value="TreeGrafter"/>
</dbReference>
<dbReference type="FunFam" id="3.40.50.12280:FF:000002">
    <property type="entry name" value="NADH-quinone oxidoreductase subunit B"/>
    <property type="match status" value="1"/>
</dbReference>
<dbReference type="Gene3D" id="3.40.50.12280">
    <property type="match status" value="1"/>
</dbReference>
<dbReference type="HAMAP" id="MF_01356">
    <property type="entry name" value="NDH1_NuoB"/>
    <property type="match status" value="1"/>
</dbReference>
<dbReference type="InterPro" id="IPR006137">
    <property type="entry name" value="NADH_UbQ_OxRdtase-like_20kDa"/>
</dbReference>
<dbReference type="InterPro" id="IPR006138">
    <property type="entry name" value="NADH_UQ_OxRdtase_20Kd_su"/>
</dbReference>
<dbReference type="NCBIfam" id="TIGR01957">
    <property type="entry name" value="nuoB_fam"/>
    <property type="match status" value="1"/>
</dbReference>
<dbReference type="NCBIfam" id="NF005012">
    <property type="entry name" value="PRK06411.1"/>
    <property type="match status" value="1"/>
</dbReference>
<dbReference type="NCBIfam" id="NF011393">
    <property type="entry name" value="PRK14818.1"/>
    <property type="match status" value="1"/>
</dbReference>
<dbReference type="PANTHER" id="PTHR11995">
    <property type="entry name" value="NADH DEHYDROGENASE"/>
    <property type="match status" value="1"/>
</dbReference>
<dbReference type="PANTHER" id="PTHR11995:SF14">
    <property type="entry name" value="NADH DEHYDROGENASE [UBIQUINONE] IRON-SULFUR PROTEIN 7, MITOCHONDRIAL"/>
    <property type="match status" value="1"/>
</dbReference>
<dbReference type="Pfam" id="PF01058">
    <property type="entry name" value="Oxidored_q6"/>
    <property type="match status" value="1"/>
</dbReference>
<dbReference type="SUPFAM" id="SSF56770">
    <property type="entry name" value="HydA/Nqo6-like"/>
    <property type="match status" value="1"/>
</dbReference>
<dbReference type="PROSITE" id="PS01150">
    <property type="entry name" value="COMPLEX1_20K"/>
    <property type="match status" value="1"/>
</dbReference>
<reference key="1">
    <citation type="submission" date="2006-01" db="EMBL/GenBank/DDBJ databases">
        <title>Complete sequence of Anaeromyxobacter dehalogenans 2CP-C.</title>
        <authorList>
            <person name="Copeland A."/>
            <person name="Lucas S."/>
            <person name="Lapidus A."/>
            <person name="Barry K."/>
            <person name="Detter J.C."/>
            <person name="Glavina T."/>
            <person name="Hammon N."/>
            <person name="Israni S."/>
            <person name="Pitluck S."/>
            <person name="Brettin T."/>
            <person name="Bruce D."/>
            <person name="Han C."/>
            <person name="Tapia R."/>
            <person name="Gilna P."/>
            <person name="Kiss H."/>
            <person name="Schmutz J."/>
            <person name="Larimer F."/>
            <person name="Land M."/>
            <person name="Kyrpides N."/>
            <person name="Anderson I."/>
            <person name="Sanford R.A."/>
            <person name="Ritalahti K.M."/>
            <person name="Thomas H.S."/>
            <person name="Kirby J.R."/>
            <person name="Zhulin I.B."/>
            <person name="Loeffler F.E."/>
            <person name="Richardson P."/>
        </authorList>
    </citation>
    <scope>NUCLEOTIDE SEQUENCE [LARGE SCALE GENOMIC DNA]</scope>
    <source>
        <strain>2CP-C</strain>
    </source>
</reference>
<proteinExistence type="inferred from homology"/>
<accession>Q2IL09</accession>
<feature type="chain" id="PRO_0000358343" description="NADH-quinone oxidoreductase subunit B 2">
    <location>
        <begin position="1"/>
        <end position="173"/>
    </location>
</feature>
<feature type="binding site" evidence="2">
    <location>
        <position position="42"/>
    </location>
    <ligand>
        <name>[4Fe-4S] cluster</name>
        <dbReference type="ChEBI" id="CHEBI:49883"/>
    </ligand>
</feature>
<feature type="binding site" evidence="2">
    <location>
        <position position="43"/>
    </location>
    <ligand>
        <name>[4Fe-4S] cluster</name>
        <dbReference type="ChEBI" id="CHEBI:49883"/>
    </ligand>
</feature>
<feature type="binding site" evidence="2">
    <location>
        <position position="107"/>
    </location>
    <ligand>
        <name>[4Fe-4S] cluster</name>
        <dbReference type="ChEBI" id="CHEBI:49883"/>
    </ligand>
</feature>
<feature type="binding site" evidence="2">
    <location>
        <position position="137"/>
    </location>
    <ligand>
        <name>[4Fe-4S] cluster</name>
        <dbReference type="ChEBI" id="CHEBI:49883"/>
    </ligand>
</feature>
<sequence length="173" mass="18786">MAARMDPGIGGEVTLLHTSQLDNLINLARASSLYYLTFGLACCGIELMQTGGPRADLMRFGAIPRASPRQADFMIVAGTLTYKMAERARLLYDQMPEPKYVISMGSCSNCGGLFQLGYSVCKGVDKVIPVDVYVPGCPPRPEALTEGLLRLQEIVRSEPWSTKRRPAAQAEGA</sequence>
<gene>
    <name evidence="2" type="primary">nuoB2</name>
    <name type="ordered locus">Adeh_2572</name>
</gene>
<organism>
    <name type="scientific">Anaeromyxobacter dehalogenans (strain 2CP-C)</name>
    <dbReference type="NCBI Taxonomy" id="290397"/>
    <lineage>
        <taxon>Bacteria</taxon>
        <taxon>Pseudomonadati</taxon>
        <taxon>Myxococcota</taxon>
        <taxon>Myxococcia</taxon>
        <taxon>Myxococcales</taxon>
        <taxon>Cystobacterineae</taxon>
        <taxon>Anaeromyxobacteraceae</taxon>
        <taxon>Anaeromyxobacter</taxon>
    </lineage>
</organism>